<feature type="chain" id="PRO_1000095847" description="Indole-3-glycerol phosphate synthase">
    <location>
        <begin position="1"/>
        <end position="268"/>
    </location>
</feature>
<comment type="catalytic activity">
    <reaction evidence="1">
        <text>1-(2-carboxyphenylamino)-1-deoxy-D-ribulose 5-phosphate + H(+) = (1S,2R)-1-C-(indol-3-yl)glycerol 3-phosphate + CO2 + H2O</text>
        <dbReference type="Rhea" id="RHEA:23476"/>
        <dbReference type="ChEBI" id="CHEBI:15377"/>
        <dbReference type="ChEBI" id="CHEBI:15378"/>
        <dbReference type="ChEBI" id="CHEBI:16526"/>
        <dbReference type="ChEBI" id="CHEBI:58613"/>
        <dbReference type="ChEBI" id="CHEBI:58866"/>
        <dbReference type="EC" id="4.1.1.48"/>
    </reaction>
</comment>
<comment type="pathway">
    <text evidence="1">Amino-acid biosynthesis; L-tryptophan biosynthesis; L-tryptophan from chorismate: step 4/5.</text>
</comment>
<comment type="similarity">
    <text evidence="1">Belongs to the TrpC family.</text>
</comment>
<dbReference type="EC" id="4.1.1.48" evidence="1"/>
<dbReference type="EMBL" id="CU459141">
    <property type="protein sequence ID" value="CAM86046.1"/>
    <property type="molecule type" value="Genomic_DNA"/>
</dbReference>
<dbReference type="RefSeq" id="WP_000608308.1">
    <property type="nucleotide sequence ID" value="NZ_JBDGFB010000024.1"/>
</dbReference>
<dbReference type="SMR" id="B0VBS1"/>
<dbReference type="EnsemblBacteria" id="CAM86046">
    <property type="protein sequence ID" value="CAM86046"/>
    <property type="gene ID" value="ABAYE1118"/>
</dbReference>
<dbReference type="KEGG" id="aby:ABAYE1118"/>
<dbReference type="HOGENOM" id="CLU_034247_2_0_6"/>
<dbReference type="UniPathway" id="UPA00035">
    <property type="reaction ID" value="UER00043"/>
</dbReference>
<dbReference type="GO" id="GO:0004425">
    <property type="term" value="F:indole-3-glycerol-phosphate synthase activity"/>
    <property type="evidence" value="ECO:0007669"/>
    <property type="project" value="UniProtKB-UniRule"/>
</dbReference>
<dbReference type="GO" id="GO:0004640">
    <property type="term" value="F:phosphoribosylanthranilate isomerase activity"/>
    <property type="evidence" value="ECO:0007669"/>
    <property type="project" value="TreeGrafter"/>
</dbReference>
<dbReference type="GO" id="GO:0000162">
    <property type="term" value="P:L-tryptophan biosynthetic process"/>
    <property type="evidence" value="ECO:0007669"/>
    <property type="project" value="UniProtKB-UniRule"/>
</dbReference>
<dbReference type="CDD" id="cd00331">
    <property type="entry name" value="IGPS"/>
    <property type="match status" value="1"/>
</dbReference>
<dbReference type="FunFam" id="3.20.20.70:FF:000024">
    <property type="entry name" value="Indole-3-glycerol phosphate synthase"/>
    <property type="match status" value="1"/>
</dbReference>
<dbReference type="Gene3D" id="3.20.20.70">
    <property type="entry name" value="Aldolase class I"/>
    <property type="match status" value="1"/>
</dbReference>
<dbReference type="HAMAP" id="MF_00134_B">
    <property type="entry name" value="IGPS_B"/>
    <property type="match status" value="1"/>
</dbReference>
<dbReference type="InterPro" id="IPR013785">
    <property type="entry name" value="Aldolase_TIM"/>
</dbReference>
<dbReference type="InterPro" id="IPR045186">
    <property type="entry name" value="Indole-3-glycerol_P_synth"/>
</dbReference>
<dbReference type="InterPro" id="IPR013798">
    <property type="entry name" value="Indole-3-glycerol_P_synth_dom"/>
</dbReference>
<dbReference type="InterPro" id="IPR001468">
    <property type="entry name" value="Indole-3-GlycerolPSynthase_CS"/>
</dbReference>
<dbReference type="InterPro" id="IPR011060">
    <property type="entry name" value="RibuloseP-bd_barrel"/>
</dbReference>
<dbReference type="NCBIfam" id="NF001373">
    <property type="entry name" value="PRK00278.1-6"/>
    <property type="match status" value="1"/>
</dbReference>
<dbReference type="NCBIfam" id="NF001377">
    <property type="entry name" value="PRK00278.2-4"/>
    <property type="match status" value="1"/>
</dbReference>
<dbReference type="PANTHER" id="PTHR22854:SF2">
    <property type="entry name" value="INDOLE-3-GLYCEROL-PHOSPHATE SYNTHASE"/>
    <property type="match status" value="1"/>
</dbReference>
<dbReference type="PANTHER" id="PTHR22854">
    <property type="entry name" value="TRYPTOPHAN BIOSYNTHESIS PROTEIN"/>
    <property type="match status" value="1"/>
</dbReference>
<dbReference type="Pfam" id="PF00218">
    <property type="entry name" value="IGPS"/>
    <property type="match status" value="1"/>
</dbReference>
<dbReference type="SUPFAM" id="SSF51366">
    <property type="entry name" value="Ribulose-phoshate binding barrel"/>
    <property type="match status" value="1"/>
</dbReference>
<dbReference type="PROSITE" id="PS00614">
    <property type="entry name" value="IGPS"/>
    <property type="match status" value="1"/>
</dbReference>
<accession>B0VBS1</accession>
<organism>
    <name type="scientific">Acinetobacter baumannii (strain AYE)</name>
    <dbReference type="NCBI Taxonomy" id="509173"/>
    <lineage>
        <taxon>Bacteria</taxon>
        <taxon>Pseudomonadati</taxon>
        <taxon>Pseudomonadota</taxon>
        <taxon>Gammaproteobacteria</taxon>
        <taxon>Moraxellales</taxon>
        <taxon>Moraxellaceae</taxon>
        <taxon>Acinetobacter</taxon>
        <taxon>Acinetobacter calcoaceticus/baumannii complex</taxon>
    </lineage>
</organism>
<evidence type="ECO:0000255" key="1">
    <source>
        <dbReference type="HAMAP-Rule" id="MF_00134"/>
    </source>
</evidence>
<proteinExistence type="inferred from homology"/>
<name>TRPC_ACIBY</name>
<protein>
    <recommendedName>
        <fullName evidence="1">Indole-3-glycerol phosphate synthase</fullName>
        <shortName evidence="1">IGPS</shortName>
        <ecNumber evidence="1">4.1.1.48</ecNumber>
    </recommendedName>
</protein>
<sequence>MINIQNTILGKIVDRKHEELAARLKQRNLQDVEELAKAATPVRGFANALQHKRPGVIAEIKKASPSKGIIRADFNPAEIAQQYEQAGAACLSVLTDVDFFQGADENIAIARNHCALPALRKDFLVDPYNVVEARALHADCILLIVACLSDQQLEEMSKTAFEHQLDVLVEVHDEEELERALKLSEQCLLGVNNRNLKTFDVDLNTTIRLKKLLPASRLLITESGIATPDDVRMMQEHDIHSFLVGESFMKQPRPDQAFTALFGQPQTV</sequence>
<gene>
    <name evidence="1" type="primary">trpC</name>
    <name type="ordered locus">ABAYE1118</name>
</gene>
<keyword id="KW-0028">Amino-acid biosynthesis</keyword>
<keyword id="KW-0057">Aromatic amino acid biosynthesis</keyword>
<keyword id="KW-0210">Decarboxylase</keyword>
<keyword id="KW-0456">Lyase</keyword>
<keyword id="KW-0822">Tryptophan biosynthesis</keyword>
<reference key="1">
    <citation type="journal article" date="2008" name="PLoS ONE">
        <title>Comparative analysis of Acinetobacters: three genomes for three lifestyles.</title>
        <authorList>
            <person name="Vallenet D."/>
            <person name="Nordmann P."/>
            <person name="Barbe V."/>
            <person name="Poirel L."/>
            <person name="Mangenot S."/>
            <person name="Bataille E."/>
            <person name="Dossat C."/>
            <person name="Gas S."/>
            <person name="Kreimeyer A."/>
            <person name="Lenoble P."/>
            <person name="Oztas S."/>
            <person name="Poulain J."/>
            <person name="Segurens B."/>
            <person name="Robert C."/>
            <person name="Abergel C."/>
            <person name="Claverie J.-M."/>
            <person name="Raoult D."/>
            <person name="Medigue C."/>
            <person name="Weissenbach J."/>
            <person name="Cruveiller S."/>
        </authorList>
    </citation>
    <scope>NUCLEOTIDE SEQUENCE [LARGE SCALE GENOMIC DNA]</scope>
    <source>
        <strain>AYE</strain>
    </source>
</reference>